<name>JZT1A_CHIGU</name>
<protein>
    <recommendedName>
        <fullName evidence="11">Delta-theraphotoxin-Cg1a 1</fullName>
        <shortName evidence="11">Delta-TRTX-Cg1a</shortName>
    </recommendedName>
    <alternativeName>
        <fullName evidence="11">Jingzhaotoxin-1</fullName>
    </alternativeName>
    <alternativeName>
        <fullName evidence="9">Jingzhaotoxin-I</fullName>
        <shortName evidence="9">JZTX-I</shortName>
    </alternativeName>
    <alternativeName>
        <fullName evidence="10">Peptide F5-24.92</fullName>
    </alternativeName>
</protein>
<feature type="signal peptide" evidence="1">
    <location>
        <begin position="1"/>
        <end position="21"/>
    </location>
</feature>
<feature type="propeptide" id="PRO_0000398385" evidence="2 5">
    <location>
        <begin position="22"/>
        <end position="29"/>
    </location>
</feature>
<feature type="chain" id="PRO_0000035594" description="Delta-theraphotoxin-Cg1a 1" evidence="2 5">
    <location>
        <begin position="30"/>
        <end position="62"/>
    </location>
</feature>
<feature type="disulfide bond" evidence="3">
    <location>
        <begin position="31"/>
        <end position="46"/>
    </location>
</feature>
<feature type="disulfide bond" evidence="3">
    <location>
        <begin position="38"/>
        <end position="51"/>
    </location>
</feature>
<feature type="disulfide bond" evidence="3">
    <location>
        <begin position="45"/>
        <end position="58"/>
    </location>
</feature>
<accession>P83974</accession>
<accession>Q5W1E3</accession>
<reference key="1">
    <citation type="journal article" date="2005" name="J. Biol. Chem.">
        <title>Jingzhaotoxin-I, a novel spider neurotoxin preferentially inhibiting cardiac sodium channel inactivation.</title>
        <authorList>
            <person name="Xiao Y.-C."/>
            <person name="Tang J.Z."/>
            <person name="Hu W."/>
            <person name="Xie J.Y."/>
            <person name="Maertens C."/>
            <person name="Tytgat J."/>
            <person name="Liang S.P."/>
        </authorList>
    </citation>
    <scope>NUCLEOTIDE SEQUENCE [MRNA]</scope>
    <scope>PROTEIN SEQUENCE OF 30-62</scope>
    <scope>FUNCTION</scope>
    <scope>SUBCELLULAR LOCATION</scope>
    <source>
        <tissue>Venom</tissue>
        <tissue>Venom gland</tissue>
    </source>
</reference>
<reference key="2">
    <citation type="journal article" date="2007" name="Proteomics">
        <title>Proteomic and peptidomic analysis of the venom from Chinese tarantula Chilobrachys jingzhao.</title>
        <authorList>
            <person name="Liao Z."/>
            <person name="Cao J."/>
            <person name="Li S."/>
            <person name="Yan X."/>
            <person name="Hu W."/>
            <person name="He Q."/>
            <person name="Chen J."/>
            <person name="Tang J."/>
            <person name="Xie J."/>
            <person name="Liang S."/>
        </authorList>
    </citation>
    <scope>PROTEIN SEQUENCE OF 30-62</scope>
    <scope>IDENTIFICATION BY MASS SPECTROMETRY</scope>
    <source>
        <tissue>Venom</tissue>
    </source>
</reference>
<reference key="3">
    <citation type="journal article" date="2007" name="Biochem. Biophys. Res. Commun.">
        <title>Effects and mechanism of Chinese tarantula toxins on the Kv2.1 potassium channels.</title>
        <authorList>
            <person name="Yuan C."/>
            <person name="Yang S."/>
            <person name="Liao Z."/>
            <person name="Liang S."/>
        </authorList>
    </citation>
    <scope>FUNCTION</scope>
    <scope>BIOASSAY</scope>
    <source>
        <tissue>Venom</tissue>
    </source>
</reference>
<reference key="4">
    <citation type="journal article" date="2007" name="Toxicon">
        <title>Characterization of the excitatory mechanism induced by Jingzhaotoxin-I inhibiting sodium channel inactivation.</title>
        <authorList>
            <person name="Xiao Y.-C."/>
            <person name="Li J."/>
            <person name="Deng M."/>
            <person name="Dai C.-L."/>
            <person name="Liang S.-P."/>
        </authorList>
    </citation>
    <scope>FUNCTION</scope>
    <source>
        <tissue>Venom</tissue>
    </source>
</reference>
<reference key="5">
    <citation type="journal article" date="2013" name="Toxicon">
        <title>Molecular determinants for the tarantula toxin jingzhaotoxin-I interacting with potassium channel Kv2.1.</title>
        <authorList>
            <person name="Tao H."/>
            <person name="Wu Y."/>
            <person name="Deng M."/>
            <person name="He J."/>
            <person name="Wang M."/>
            <person name="Xiao Y."/>
            <person name="Liang S."/>
        </authorList>
    </citation>
    <scope>FUNCTION</scope>
    <source>
        <tissue>Venom</tissue>
    </source>
</reference>
<reference key="6">
    <citation type="journal article" date="2016" name="Toxicon">
        <title>Molecular determinant for the tarantula toxin Jingzhaotoxin-I slowing the fast inactivation of voltage-gated sodium channels.</title>
        <authorList>
            <person name="Tao H."/>
            <person name="Chen X."/>
            <person name="Lu M."/>
            <person name="Wu Y."/>
            <person name="Deng M."/>
            <person name="Zeng X."/>
            <person name="Liu Z."/>
            <person name="Liang S."/>
        </authorList>
    </citation>
    <scope>FUNCTION</scope>
</reference>
<reference key="7">
    <citation type="journal article" date="2005" name="Acta Biochim. Biophys. Sin.">
        <title>Sequence-specific assignment of 1H-NMR resonance and determination of the secondary structure of Jingzhaotoxin-I.</title>
        <authorList>
            <person name="Zeng X.-Z."/>
            <person name="Zhu Q."/>
            <person name="Liang S.-P."/>
        </authorList>
    </citation>
    <scope>STRUCTURE BY NMR OF 30-62</scope>
    <scope>DISULFIDE BONDS</scope>
    <source>
        <tissue>Venom</tissue>
    </source>
</reference>
<evidence type="ECO:0000255" key="1"/>
<evidence type="ECO:0000269" key="2">
    <source>
    </source>
</evidence>
<evidence type="ECO:0000269" key="3">
    <source>
    </source>
</evidence>
<evidence type="ECO:0000269" key="4">
    <source>
    </source>
</evidence>
<evidence type="ECO:0000269" key="5">
    <source>
    </source>
</evidence>
<evidence type="ECO:0000269" key="6">
    <source>
    </source>
</evidence>
<evidence type="ECO:0000269" key="7">
    <source>
    </source>
</evidence>
<evidence type="ECO:0000269" key="8">
    <source>
    </source>
</evidence>
<evidence type="ECO:0000303" key="9">
    <source>
    </source>
</evidence>
<evidence type="ECO:0000303" key="10">
    <source>
    </source>
</evidence>
<evidence type="ECO:0000305" key="11"/>
<evidence type="ECO:0000305" key="12">
    <source>
    </source>
</evidence>
<comment type="function">
    <text evidence="2 4 6 7">Inhibits voltage-gated sodium channels, preferentially subtype Nav1.5/SCN5A (in cardiac myocytes), but also Nav1.6/SCN8A and Nav1.7/SCN9A (TTX-sensitive Nav in rat DRG neurons) and invertebrate Nav (in insect neurons) as well as voltage-gated potassium channels of the subtype Kv2.1/KCNB1. Is suggested to bind to site 3 of the sodium channels and inhibit the inactivation of the activated channels, thereby blocking neuronal transmission. On potassium channels, inhibits activation of channels with an IC(50) of 8.05 uM through a voltage sensor-trapping mechanism (PubMed:23246579). Increases muscle contraction in several assays (mouse phrenic nerve-diaphragm, toad heart, rat vas deferens) and is suggested to act both presynaptically and postsynaptically.</text>
</comment>
<comment type="function">
    <text evidence="2 4 6 7 8">Moderately inhibits voltage-gated sodium channels and weakly inhibits voltage-gated potassium channel (PubMed:17150181, PubMed:17618665, PubMed:23246579, PubMed:26721415). Inhibits the inactivation of rat Nav1.2/SCN2A (IC(50)=870 nM), rat Nav1.3/SCN3A (IC(50)=845 nM), rat Nav1.4/SCN4A (IC(50)=339 nM), human Nav1.5/SCN5A (IC(50)=335 nM) and human Nav1.7/SCN9A sodium channels (IC(50)=348 nM) (PubMed:26721415). The toxin delays the inactivation of sodium channels without affecting the activation and steady-state inactivation kinetics in the physiological range of voltages (PubMed:26721415). Site-directed mutagenesis of the sodium channel indicates that the toxin interacts with site 3 located at the extracellular S3-S4 linker of domain IV (PubMed:26721415). On potassium channels, it inhibits activation of channels with an IC(50) of 8.05 uM through a voltage sensor-trapping mechanism (PubMed:23246579). It increases muscle contraction in several assays (mouse phrenic nerve-diaphragm, toad heart, rat vas deferens) and is suggested to act both presynaptically and postsynaptically (PubMed:17618665).</text>
</comment>
<comment type="subcellular location">
    <subcellularLocation>
        <location evidence="2">Secreted</location>
    </subcellularLocation>
</comment>
<comment type="tissue specificity">
    <text evidence="12">Expressed by the venom gland.</text>
</comment>
<comment type="domain">
    <text evidence="3">The presence of a 'disulfide through disulfide knot' structurally defines this protein as a knottin.</text>
</comment>
<comment type="similarity">
    <text evidence="11">Belongs to the neurotoxin 10 (Hwtx-1) family. 33 (Jztx-1) subfamily.</text>
</comment>
<proteinExistence type="evidence at protein level"/>
<sequence length="62" mass="6894">MKTSILFVIFSLALLFALSAATEIEETDRACGQFWWKCGEGKPPCCANFACKIGLYLCIWSP</sequence>
<keyword id="KW-0903">Direct protein sequencing</keyword>
<keyword id="KW-1015">Disulfide bond</keyword>
<keyword id="KW-0872">Ion channel impairing toxin</keyword>
<keyword id="KW-0960">Knottin</keyword>
<keyword id="KW-0528">Neurotoxin</keyword>
<keyword id="KW-0629">Postsynaptic neurotoxin</keyword>
<keyword id="KW-0632">Potassium channel impairing toxin</keyword>
<keyword id="KW-0638">Presynaptic neurotoxin</keyword>
<keyword id="KW-0964">Secreted</keyword>
<keyword id="KW-0732">Signal</keyword>
<keyword id="KW-0800">Toxin</keyword>
<keyword id="KW-1220">Voltage-gated potassium channel impairing toxin</keyword>
<keyword id="KW-0738">Voltage-gated sodium channel impairing toxin</keyword>
<dbReference type="EMBL" id="AJ854060">
    <property type="protein sequence ID" value="CAH69598.1"/>
    <property type="molecule type" value="mRNA"/>
</dbReference>
<dbReference type="SMR" id="P83974"/>
<dbReference type="ArachnoServer" id="AS000045">
    <property type="toxin name" value="delta-theraphotoxin-Cg1a"/>
</dbReference>
<dbReference type="GO" id="GO:0005576">
    <property type="term" value="C:extracellular region"/>
    <property type="evidence" value="ECO:0007669"/>
    <property type="project" value="UniProtKB-SubCell"/>
</dbReference>
<dbReference type="GO" id="GO:0035792">
    <property type="term" value="C:host cell postsynaptic membrane"/>
    <property type="evidence" value="ECO:0007669"/>
    <property type="project" value="UniProtKB-KW"/>
</dbReference>
<dbReference type="GO" id="GO:0044231">
    <property type="term" value="C:host cell presynaptic membrane"/>
    <property type="evidence" value="ECO:0007669"/>
    <property type="project" value="UniProtKB-KW"/>
</dbReference>
<dbReference type="GO" id="GO:0008200">
    <property type="term" value="F:ion channel inhibitor activity"/>
    <property type="evidence" value="ECO:0007669"/>
    <property type="project" value="InterPro"/>
</dbReference>
<dbReference type="GO" id="GO:0015459">
    <property type="term" value="F:potassium channel regulator activity"/>
    <property type="evidence" value="ECO:0007669"/>
    <property type="project" value="UniProtKB-KW"/>
</dbReference>
<dbReference type="GO" id="GO:0017080">
    <property type="term" value="F:sodium channel regulator activity"/>
    <property type="evidence" value="ECO:0007669"/>
    <property type="project" value="UniProtKB-KW"/>
</dbReference>
<dbReference type="GO" id="GO:0090729">
    <property type="term" value="F:toxin activity"/>
    <property type="evidence" value="ECO:0007669"/>
    <property type="project" value="UniProtKB-KW"/>
</dbReference>
<dbReference type="InterPro" id="IPR011696">
    <property type="entry name" value="Huwentoxin-1"/>
</dbReference>
<dbReference type="Pfam" id="PF07740">
    <property type="entry name" value="Toxin_12"/>
    <property type="match status" value="1"/>
</dbReference>
<organism>
    <name type="scientific">Chilobrachys guangxiensis</name>
    <name type="common">Chinese earth tiger tarantula</name>
    <name type="synonym">Chilobrachys jingzhao</name>
    <dbReference type="NCBI Taxonomy" id="278060"/>
    <lineage>
        <taxon>Eukaryota</taxon>
        <taxon>Metazoa</taxon>
        <taxon>Ecdysozoa</taxon>
        <taxon>Arthropoda</taxon>
        <taxon>Chelicerata</taxon>
        <taxon>Arachnida</taxon>
        <taxon>Araneae</taxon>
        <taxon>Mygalomorphae</taxon>
        <taxon>Theraphosidae</taxon>
        <taxon>Chilobrachys</taxon>
    </lineage>
</organism>